<dbReference type="EC" id="2.5.1.7" evidence="1"/>
<dbReference type="EMBL" id="CP000003">
    <property type="protein sequence ID" value="AAT86736.1"/>
    <property type="molecule type" value="Genomic_DNA"/>
</dbReference>
<dbReference type="RefSeq" id="WP_002994428.1">
    <property type="nucleotide sequence ID" value="NC_006086.1"/>
</dbReference>
<dbReference type="SMR" id="Q5XCX7"/>
<dbReference type="KEGG" id="spa:M6_Spy0601"/>
<dbReference type="HOGENOM" id="CLU_027387_0_0_9"/>
<dbReference type="UniPathway" id="UPA00219"/>
<dbReference type="Proteomes" id="UP000001167">
    <property type="component" value="Chromosome"/>
</dbReference>
<dbReference type="GO" id="GO:0005737">
    <property type="term" value="C:cytoplasm"/>
    <property type="evidence" value="ECO:0007669"/>
    <property type="project" value="UniProtKB-SubCell"/>
</dbReference>
<dbReference type="GO" id="GO:0008760">
    <property type="term" value="F:UDP-N-acetylglucosamine 1-carboxyvinyltransferase activity"/>
    <property type="evidence" value="ECO:0007669"/>
    <property type="project" value="UniProtKB-UniRule"/>
</dbReference>
<dbReference type="GO" id="GO:0051301">
    <property type="term" value="P:cell division"/>
    <property type="evidence" value="ECO:0007669"/>
    <property type="project" value="UniProtKB-KW"/>
</dbReference>
<dbReference type="GO" id="GO:0071555">
    <property type="term" value="P:cell wall organization"/>
    <property type="evidence" value="ECO:0007669"/>
    <property type="project" value="UniProtKB-KW"/>
</dbReference>
<dbReference type="GO" id="GO:0009252">
    <property type="term" value="P:peptidoglycan biosynthetic process"/>
    <property type="evidence" value="ECO:0007669"/>
    <property type="project" value="UniProtKB-UniRule"/>
</dbReference>
<dbReference type="GO" id="GO:0008360">
    <property type="term" value="P:regulation of cell shape"/>
    <property type="evidence" value="ECO:0007669"/>
    <property type="project" value="UniProtKB-KW"/>
</dbReference>
<dbReference type="GO" id="GO:0019277">
    <property type="term" value="P:UDP-N-acetylgalactosamine biosynthetic process"/>
    <property type="evidence" value="ECO:0007669"/>
    <property type="project" value="InterPro"/>
</dbReference>
<dbReference type="CDD" id="cd01555">
    <property type="entry name" value="UdpNAET"/>
    <property type="match status" value="1"/>
</dbReference>
<dbReference type="FunFam" id="3.65.10.10:FF:000001">
    <property type="entry name" value="UDP-N-acetylglucosamine 1-carboxyvinyltransferase"/>
    <property type="match status" value="1"/>
</dbReference>
<dbReference type="Gene3D" id="3.65.10.10">
    <property type="entry name" value="Enolpyruvate transferase domain"/>
    <property type="match status" value="2"/>
</dbReference>
<dbReference type="HAMAP" id="MF_00111">
    <property type="entry name" value="MurA"/>
    <property type="match status" value="1"/>
</dbReference>
<dbReference type="InterPro" id="IPR001986">
    <property type="entry name" value="Enolpyruvate_Tfrase_dom"/>
</dbReference>
<dbReference type="InterPro" id="IPR036968">
    <property type="entry name" value="Enolpyruvate_Tfrase_sf"/>
</dbReference>
<dbReference type="InterPro" id="IPR050068">
    <property type="entry name" value="MurA_subfamily"/>
</dbReference>
<dbReference type="InterPro" id="IPR013792">
    <property type="entry name" value="RNA3'P_cycl/enolpyr_Trfase_a/b"/>
</dbReference>
<dbReference type="InterPro" id="IPR005750">
    <property type="entry name" value="UDP_GlcNAc_COvinyl_MurA"/>
</dbReference>
<dbReference type="NCBIfam" id="TIGR01072">
    <property type="entry name" value="murA"/>
    <property type="match status" value="1"/>
</dbReference>
<dbReference type="NCBIfam" id="NF006873">
    <property type="entry name" value="PRK09369.1"/>
    <property type="match status" value="1"/>
</dbReference>
<dbReference type="PANTHER" id="PTHR43783">
    <property type="entry name" value="UDP-N-ACETYLGLUCOSAMINE 1-CARBOXYVINYLTRANSFERASE"/>
    <property type="match status" value="1"/>
</dbReference>
<dbReference type="PANTHER" id="PTHR43783:SF1">
    <property type="entry name" value="UDP-N-ACETYLGLUCOSAMINE 1-CARBOXYVINYLTRANSFERASE"/>
    <property type="match status" value="1"/>
</dbReference>
<dbReference type="Pfam" id="PF00275">
    <property type="entry name" value="EPSP_synthase"/>
    <property type="match status" value="1"/>
</dbReference>
<dbReference type="SUPFAM" id="SSF55205">
    <property type="entry name" value="EPT/RTPC-like"/>
    <property type="match status" value="1"/>
</dbReference>
<organism>
    <name type="scientific">Streptococcus pyogenes serotype M6 (strain ATCC BAA-946 / MGAS10394)</name>
    <dbReference type="NCBI Taxonomy" id="286636"/>
    <lineage>
        <taxon>Bacteria</taxon>
        <taxon>Bacillati</taxon>
        <taxon>Bacillota</taxon>
        <taxon>Bacilli</taxon>
        <taxon>Lactobacillales</taxon>
        <taxon>Streptococcaceae</taxon>
        <taxon>Streptococcus</taxon>
    </lineage>
</organism>
<accession>Q5XCX7</accession>
<gene>
    <name evidence="1" type="primary">murA1</name>
    <name type="synonym">murA</name>
    <name type="ordered locus">M6_Spy0601</name>
</gene>
<keyword id="KW-0131">Cell cycle</keyword>
<keyword id="KW-0132">Cell division</keyword>
<keyword id="KW-0133">Cell shape</keyword>
<keyword id="KW-0961">Cell wall biogenesis/degradation</keyword>
<keyword id="KW-0963">Cytoplasm</keyword>
<keyword id="KW-0573">Peptidoglycan synthesis</keyword>
<keyword id="KW-0670">Pyruvate</keyword>
<keyword id="KW-0808">Transferase</keyword>
<name>MURA1_STRP6</name>
<feature type="chain" id="PRO_0000178938" description="UDP-N-acetylglucosamine 1-carboxyvinyltransferase 1">
    <location>
        <begin position="1"/>
        <end position="423"/>
    </location>
</feature>
<feature type="active site" description="Proton donor" evidence="1">
    <location>
        <position position="120"/>
    </location>
</feature>
<feature type="binding site" evidence="1">
    <location>
        <begin position="23"/>
        <end position="24"/>
    </location>
    <ligand>
        <name>phosphoenolpyruvate</name>
        <dbReference type="ChEBI" id="CHEBI:58702"/>
    </ligand>
</feature>
<feature type="binding site" evidence="1">
    <location>
        <position position="96"/>
    </location>
    <ligand>
        <name>UDP-N-acetyl-alpha-D-glucosamine</name>
        <dbReference type="ChEBI" id="CHEBI:57705"/>
    </ligand>
</feature>
<feature type="binding site" evidence="1">
    <location>
        <position position="309"/>
    </location>
    <ligand>
        <name>UDP-N-acetyl-alpha-D-glucosamine</name>
        <dbReference type="ChEBI" id="CHEBI:57705"/>
    </ligand>
</feature>
<feature type="binding site" evidence="1">
    <location>
        <position position="331"/>
    </location>
    <ligand>
        <name>UDP-N-acetyl-alpha-D-glucosamine</name>
        <dbReference type="ChEBI" id="CHEBI:57705"/>
    </ligand>
</feature>
<feature type="modified residue" description="2-(S-cysteinyl)pyruvic acid O-phosphothioketal" evidence="1">
    <location>
        <position position="120"/>
    </location>
</feature>
<sequence length="423" mass="45670">MDKIIIEGGQTRLEGEVVIEGAKNAVLPLLAASILPSKGKTILRNVPILSDVFTMNNVVRGLDIRVDFNEAANEITVDASGHILDEAPYEYVSQMRASIVVLGPILARNGHAKVSMPGGCTIGSRPINLHLKGLEAMGATITQKGGDITAQADRLQGAMIYMDFPSVGATQNLMMAATLADGVTTIENAAREPEIVDLAQFLNKMGARIRGAGTETLTITGVTHLRGVEHDVVQDRIEAGTFMVAAAMTSGNVLIRDAVWEHNRPLISKLMEMGVSVTEEEYGIRVQANTPKLKPVTVKTLPHPGFPTDMQAQFTALMAVVNGESTMVETVFENRFQHLEEMRRMGLQSEILRETAMIHGGRQLQGAPVMSTDLRASAALILTGIVAQGVTIVNNLVHLDRGYYQFHEKLAKLGATISRSSEV</sequence>
<protein>
    <recommendedName>
        <fullName evidence="1">UDP-N-acetylglucosamine 1-carboxyvinyltransferase 1</fullName>
        <ecNumber evidence="1">2.5.1.7</ecNumber>
    </recommendedName>
    <alternativeName>
        <fullName evidence="1">Enoylpyruvate transferase 1</fullName>
    </alternativeName>
    <alternativeName>
        <fullName evidence="1">UDP-N-acetylglucosamine enolpyruvyl transferase 1</fullName>
        <shortName evidence="1">EPT 1</shortName>
    </alternativeName>
</protein>
<evidence type="ECO:0000255" key="1">
    <source>
        <dbReference type="HAMAP-Rule" id="MF_00111"/>
    </source>
</evidence>
<reference key="1">
    <citation type="journal article" date="2004" name="J. Infect. Dis.">
        <title>Progress toward characterization of the group A Streptococcus metagenome: complete genome sequence of a macrolide-resistant serotype M6 strain.</title>
        <authorList>
            <person name="Banks D.J."/>
            <person name="Porcella S.F."/>
            <person name="Barbian K.D."/>
            <person name="Beres S.B."/>
            <person name="Philips L.E."/>
            <person name="Voyich J.M."/>
            <person name="DeLeo F.R."/>
            <person name="Martin J.M."/>
            <person name="Somerville G.A."/>
            <person name="Musser J.M."/>
        </authorList>
    </citation>
    <scope>NUCLEOTIDE SEQUENCE [LARGE SCALE GENOMIC DNA]</scope>
    <source>
        <strain>ATCC BAA-946 / MGAS10394</strain>
    </source>
</reference>
<comment type="function">
    <text evidence="1">Cell wall formation. Adds enolpyruvyl to UDP-N-acetylglucosamine.</text>
</comment>
<comment type="catalytic activity">
    <reaction evidence="1">
        <text>phosphoenolpyruvate + UDP-N-acetyl-alpha-D-glucosamine = UDP-N-acetyl-3-O-(1-carboxyvinyl)-alpha-D-glucosamine + phosphate</text>
        <dbReference type="Rhea" id="RHEA:18681"/>
        <dbReference type="ChEBI" id="CHEBI:43474"/>
        <dbReference type="ChEBI" id="CHEBI:57705"/>
        <dbReference type="ChEBI" id="CHEBI:58702"/>
        <dbReference type="ChEBI" id="CHEBI:68483"/>
        <dbReference type="EC" id="2.5.1.7"/>
    </reaction>
</comment>
<comment type="pathway">
    <text evidence="1">Cell wall biogenesis; peptidoglycan biosynthesis.</text>
</comment>
<comment type="subcellular location">
    <subcellularLocation>
        <location evidence="1">Cytoplasm</location>
    </subcellularLocation>
</comment>
<comment type="similarity">
    <text evidence="1">Belongs to the EPSP synthase family. MurA subfamily.</text>
</comment>
<proteinExistence type="inferred from homology"/>